<comment type="function">
    <text evidence="1">Mediates the interaction of DNA replication initiator protein DnaA with DNA polymerase subunit beta sliding clamp (dnaN). Stimulates hydrolysis of ATP-DnaA to ADP-DnaA, rendering DnaA inactive for reinitiation, a process called regulatory inhibition of DnaA or RIDA (By similarity).</text>
</comment>
<comment type="subunit">
    <text evidence="2">The active form seems to be an ADP-bound monomer. Forms the RIDA complex (regulatory inactivation of DnaA) of ATP-DnaA, ADP-Hda and the DNA-loaded beta sliding clamp (dnaN).</text>
</comment>
<comment type="similarity">
    <text evidence="2">Belongs to the DnaA family. HdA subfamily.</text>
</comment>
<feature type="chain" id="PRO_1000137819" description="DnaA regulatory inactivator Hda">
    <location>
        <begin position="1"/>
        <end position="241"/>
    </location>
</feature>
<proteinExistence type="inferred from homology"/>
<gene>
    <name evidence="2" type="primary">hda</name>
    <name type="ordered locus">SG2528</name>
</gene>
<protein>
    <recommendedName>
        <fullName evidence="2">DnaA regulatory inactivator Hda</fullName>
    </recommendedName>
</protein>
<organism>
    <name type="scientific">Salmonella gallinarum (strain 287/91 / NCTC 13346)</name>
    <dbReference type="NCBI Taxonomy" id="550538"/>
    <lineage>
        <taxon>Bacteria</taxon>
        <taxon>Pseudomonadati</taxon>
        <taxon>Pseudomonadota</taxon>
        <taxon>Gammaproteobacteria</taxon>
        <taxon>Enterobacterales</taxon>
        <taxon>Enterobacteriaceae</taxon>
        <taxon>Salmonella</taxon>
    </lineage>
</organism>
<accession>B5RCW8</accession>
<dbReference type="EMBL" id="AM933173">
    <property type="protein sequence ID" value="CAR38354.1"/>
    <property type="molecule type" value="Genomic_DNA"/>
</dbReference>
<dbReference type="SMR" id="B5RCW8"/>
<dbReference type="KEGG" id="seg:SG2528"/>
<dbReference type="HOGENOM" id="CLU_072265_1_1_6"/>
<dbReference type="Proteomes" id="UP000008321">
    <property type="component" value="Chromosome"/>
</dbReference>
<dbReference type="GO" id="GO:0006270">
    <property type="term" value="P:DNA replication initiation"/>
    <property type="evidence" value="ECO:0007669"/>
    <property type="project" value="TreeGrafter"/>
</dbReference>
<dbReference type="GO" id="GO:0032297">
    <property type="term" value="P:negative regulation of DNA-templated DNA replication initiation"/>
    <property type="evidence" value="ECO:0007669"/>
    <property type="project" value="InterPro"/>
</dbReference>
<dbReference type="FunFam" id="1.10.8.60:FF:000024">
    <property type="entry name" value="DnaA regulatory inactivator Hda"/>
    <property type="match status" value="1"/>
</dbReference>
<dbReference type="FunFam" id="3.40.50.300:FF:000452">
    <property type="entry name" value="DnaA regulatory inactivator Hda"/>
    <property type="match status" value="1"/>
</dbReference>
<dbReference type="Gene3D" id="1.10.8.60">
    <property type="match status" value="1"/>
</dbReference>
<dbReference type="Gene3D" id="3.40.50.300">
    <property type="entry name" value="P-loop containing nucleotide triphosphate hydrolases"/>
    <property type="match status" value="1"/>
</dbReference>
<dbReference type="HAMAP" id="MF_01158">
    <property type="entry name" value="Hda"/>
    <property type="match status" value="1"/>
</dbReference>
<dbReference type="InterPro" id="IPR020591">
    <property type="entry name" value="Chromosome_initiator_DnaA-like"/>
</dbReference>
<dbReference type="InterPro" id="IPR013317">
    <property type="entry name" value="DnaA_dom"/>
</dbReference>
<dbReference type="InterPro" id="IPR017788">
    <property type="entry name" value="Hda"/>
</dbReference>
<dbReference type="InterPro" id="IPR022864">
    <property type="entry name" value="Hda_Enterobact"/>
</dbReference>
<dbReference type="InterPro" id="IPR055199">
    <property type="entry name" value="Hda_lid"/>
</dbReference>
<dbReference type="InterPro" id="IPR027417">
    <property type="entry name" value="P-loop_NTPase"/>
</dbReference>
<dbReference type="NCBIfam" id="TIGR03420">
    <property type="entry name" value="DnaA_homol_Hda"/>
    <property type="match status" value="1"/>
</dbReference>
<dbReference type="NCBIfam" id="NF005982">
    <property type="entry name" value="PRK08084.1"/>
    <property type="match status" value="1"/>
</dbReference>
<dbReference type="PANTHER" id="PTHR30050">
    <property type="entry name" value="CHROMOSOMAL REPLICATION INITIATOR PROTEIN DNAA"/>
    <property type="match status" value="1"/>
</dbReference>
<dbReference type="PANTHER" id="PTHR30050:SF5">
    <property type="entry name" value="DNAA REGULATORY INACTIVATOR HDA"/>
    <property type="match status" value="1"/>
</dbReference>
<dbReference type="Pfam" id="PF00308">
    <property type="entry name" value="Bac_DnaA"/>
    <property type="match status" value="1"/>
</dbReference>
<dbReference type="Pfam" id="PF22688">
    <property type="entry name" value="Hda_lid"/>
    <property type="match status" value="1"/>
</dbReference>
<dbReference type="PRINTS" id="PR00051">
    <property type="entry name" value="DNAA"/>
</dbReference>
<dbReference type="SUPFAM" id="SSF52540">
    <property type="entry name" value="P-loop containing nucleoside triphosphate hydrolases"/>
    <property type="match status" value="1"/>
</dbReference>
<keyword id="KW-0235">DNA replication</keyword>
<keyword id="KW-0236">DNA replication inhibitor</keyword>
<name>HDA_SALG2</name>
<reference key="1">
    <citation type="journal article" date="2008" name="Genome Res.">
        <title>Comparative genome analysis of Salmonella enteritidis PT4 and Salmonella gallinarum 287/91 provides insights into evolutionary and host adaptation pathways.</title>
        <authorList>
            <person name="Thomson N.R."/>
            <person name="Clayton D.J."/>
            <person name="Windhorst D."/>
            <person name="Vernikos G."/>
            <person name="Davidson S."/>
            <person name="Churcher C."/>
            <person name="Quail M.A."/>
            <person name="Stevens M."/>
            <person name="Jones M.A."/>
            <person name="Watson M."/>
            <person name="Barron A."/>
            <person name="Layton A."/>
            <person name="Pickard D."/>
            <person name="Kingsley R.A."/>
            <person name="Bignell A."/>
            <person name="Clark L."/>
            <person name="Harris B."/>
            <person name="Ormond D."/>
            <person name="Abdellah Z."/>
            <person name="Brooks K."/>
            <person name="Cherevach I."/>
            <person name="Chillingworth T."/>
            <person name="Woodward J."/>
            <person name="Norberczak H."/>
            <person name="Lord A."/>
            <person name="Arrowsmith C."/>
            <person name="Jagels K."/>
            <person name="Moule S."/>
            <person name="Mungall K."/>
            <person name="Saunders M."/>
            <person name="Whitehead S."/>
            <person name="Chabalgoity J.A."/>
            <person name="Maskell D."/>
            <person name="Humphreys T."/>
            <person name="Roberts M."/>
            <person name="Barrow P.A."/>
            <person name="Dougan G."/>
            <person name="Parkhill J."/>
        </authorList>
    </citation>
    <scope>NUCLEOTIDE SEQUENCE [LARGE SCALE GENOMIC DNA]</scope>
    <source>
        <strain>287/91 / NCTC 13346</strain>
    </source>
</reference>
<sequence length="241" mass="27472">MSSWVEVSLNTPAQLSLPLYLPDDETFASFWPGDNASLLAALQNVLRQEHSGYIYLWAREGAGRSHLLHAACAELSQRGDAVGYVPLDKRTWFVPEVLDGMEHLSLVCIDNIECVAGDELWEMAIFDLYNRILESGKTRLLITGDRPPRQLNLGLPDLASRLDWGQIYKLQPLSDEDKLQALQLRARLRGFELPEDVGRFLLKRLDREMRTLFMTLDQLDHASITAQRKLTIPFVKEILKL</sequence>
<evidence type="ECO:0000250" key="1"/>
<evidence type="ECO:0000255" key="2">
    <source>
        <dbReference type="HAMAP-Rule" id="MF_01158"/>
    </source>
</evidence>